<evidence type="ECO:0000250" key="1"/>
<evidence type="ECO:0000250" key="2">
    <source>
        <dbReference type="UniProtKB" id="P62787"/>
    </source>
</evidence>
<evidence type="ECO:0000255" key="3"/>
<evidence type="ECO:0000303" key="4">
    <source>
    </source>
</evidence>
<evidence type="ECO:0000305" key="5"/>
<accession>P85945</accession>
<proteinExistence type="evidence at protein level"/>
<sequence length="18" mass="2166">ISGLIYEETRIFLENVIR</sequence>
<comment type="function">
    <text evidence="5">Core component of nucleosome. Nucleosomes wrap and compact DNA into chromatin, limiting DNA accessibility to the cellular machineries which require DNA as a template. Histones thereby play a central role in transcription regulation, DNA repair, DNA replication and chromosomal stability. DNA accessibility is regulated via a complex set of post-translational modifications of histones, also called histone code, and nucleosome remodeling.</text>
</comment>
<comment type="subunit">
    <text evidence="5">The nucleosome is a histone octamer containing two molecules each of H2A, H2B, H3 and H4 assembled in one H3-H4 heterotetramer and two H2A-H2B heterodimers. The octamer wraps approximately 147 bp of DNA.</text>
</comment>
<comment type="subcellular location">
    <subcellularLocation>
        <location evidence="2">Nucleus</location>
    </subcellularLocation>
    <subcellularLocation>
        <location evidence="1">Chromosome</location>
    </subcellularLocation>
</comment>
<comment type="similarity">
    <text evidence="3">Belongs to the histone H4 family.</text>
</comment>
<dbReference type="GO" id="GO:0000786">
    <property type="term" value="C:nucleosome"/>
    <property type="evidence" value="ECO:0007669"/>
    <property type="project" value="UniProtKB-KW"/>
</dbReference>
<dbReference type="GO" id="GO:0005634">
    <property type="term" value="C:nucleus"/>
    <property type="evidence" value="ECO:0007669"/>
    <property type="project" value="UniProtKB-SubCell"/>
</dbReference>
<dbReference type="GO" id="GO:0003677">
    <property type="term" value="F:DNA binding"/>
    <property type="evidence" value="ECO:0007669"/>
    <property type="project" value="UniProtKB-KW"/>
</dbReference>
<organism>
    <name type="scientific">Pseudotsuga menziesii</name>
    <name type="common">Douglas-fir</name>
    <name type="synonym">Abies menziesii</name>
    <dbReference type="NCBI Taxonomy" id="3357"/>
    <lineage>
        <taxon>Eukaryota</taxon>
        <taxon>Viridiplantae</taxon>
        <taxon>Streptophyta</taxon>
        <taxon>Embryophyta</taxon>
        <taxon>Tracheophyta</taxon>
        <taxon>Spermatophyta</taxon>
        <taxon>Pinopsida</taxon>
        <taxon>Pinidae</taxon>
        <taxon>Conifers I</taxon>
        <taxon>Pinales</taxon>
        <taxon>Pinaceae</taxon>
        <taxon>Pseudotsuga</taxon>
    </lineage>
</organism>
<name>H4_PSEMZ</name>
<reference evidence="5" key="1">
    <citation type="journal article" date="2008" name="J. Proteomics">
        <title>A proteomics approach to identify proteins differentially expressed in Douglas-fir seedlings infected by Phellinus sulphurascens.</title>
        <authorList>
            <person name="Islam M.A."/>
            <person name="Sturrock R.N."/>
            <person name="Ekramoddoullah A.K.M."/>
        </authorList>
    </citation>
    <scope>IDENTIFICATION BY MASS SPECTROMETRY</scope>
</reference>
<feature type="chain" id="PRO_0000397948" description="Histone H4">
    <location>
        <begin position="1" status="less than"/>
        <end position="18" status="greater than"/>
    </location>
</feature>
<feature type="non-consecutive residues" evidence="4">
    <location>
        <begin position="10"/>
        <end position="11"/>
    </location>
</feature>
<feature type="non-terminal residue" evidence="4">
    <location>
        <position position="1"/>
    </location>
</feature>
<feature type="non-terminal residue" evidence="4">
    <location>
        <position position="18"/>
    </location>
</feature>
<keyword id="KW-0158">Chromosome</keyword>
<keyword id="KW-0238">DNA-binding</keyword>
<keyword id="KW-0544">Nucleosome core</keyword>
<keyword id="KW-0539">Nucleus</keyword>
<protein>
    <recommendedName>
        <fullName evidence="2">Histone H4</fullName>
    </recommendedName>
</protein>